<feature type="chain" id="PRO_0000287155" description="Proton-coupled antiporter flippase LtaA">
    <location>
        <begin position="1"/>
        <end position="396"/>
    </location>
</feature>
<feature type="transmembrane region" description="Helical" evidence="2">
    <location>
        <begin position="15"/>
        <end position="34"/>
    </location>
</feature>
<feature type="transmembrane region" description="Helical" evidence="2">
    <location>
        <begin position="46"/>
        <end position="73"/>
    </location>
</feature>
<feature type="transmembrane region" description="Helical" evidence="2">
    <location>
        <begin position="80"/>
        <end position="99"/>
    </location>
</feature>
<feature type="transmembrane region" description="Helical" evidence="2">
    <location>
        <begin position="105"/>
        <end position="126"/>
    </location>
</feature>
<feature type="transmembrane region" description="Helical" evidence="2">
    <location>
        <begin position="138"/>
        <end position="159"/>
    </location>
</feature>
<feature type="transmembrane region" description="Helical" evidence="2">
    <location>
        <begin position="165"/>
        <end position="184"/>
    </location>
</feature>
<feature type="transmembrane region" description="Helical" evidence="2">
    <location>
        <begin position="211"/>
        <end position="231"/>
    </location>
</feature>
<feature type="transmembrane region" description="Helical" evidence="2">
    <location>
        <begin position="243"/>
        <end position="264"/>
    </location>
</feature>
<feature type="transmembrane region" description="Helical" evidence="2">
    <location>
        <begin position="276"/>
        <end position="298"/>
    </location>
</feature>
<feature type="transmembrane region" description="Helical" evidence="2">
    <location>
        <begin position="304"/>
        <end position="326"/>
    </location>
</feature>
<feature type="transmembrane region" description="Helical" evidence="2">
    <location>
        <begin position="338"/>
        <end position="358"/>
    </location>
</feature>
<feature type="transmembrane region" description="Helical" evidence="2">
    <location>
        <begin position="370"/>
        <end position="390"/>
    </location>
</feature>
<organism>
    <name type="scientific">Staphylococcus aureus (strain MSSA476)</name>
    <dbReference type="NCBI Taxonomy" id="282459"/>
    <lineage>
        <taxon>Bacteria</taxon>
        <taxon>Bacillati</taxon>
        <taxon>Bacillota</taxon>
        <taxon>Bacilli</taxon>
        <taxon>Bacillales</taxon>
        <taxon>Staphylococcaceae</taxon>
        <taxon>Staphylococcus</taxon>
    </lineage>
</organism>
<evidence type="ECO:0000250" key="1">
    <source>
        <dbReference type="UniProtKB" id="Q2FZP8"/>
    </source>
</evidence>
<evidence type="ECO:0000255" key="2"/>
<evidence type="ECO:0000305" key="3"/>
<proteinExistence type="inferred from homology"/>
<reference key="1">
    <citation type="journal article" date="2004" name="Proc. Natl. Acad. Sci. U.S.A.">
        <title>Complete genomes of two clinical Staphylococcus aureus strains: evidence for the rapid evolution of virulence and drug resistance.</title>
        <authorList>
            <person name="Holden M.T.G."/>
            <person name="Feil E.J."/>
            <person name="Lindsay J.A."/>
            <person name="Peacock S.J."/>
            <person name="Day N.P.J."/>
            <person name="Enright M.C."/>
            <person name="Foster T.J."/>
            <person name="Moore C.E."/>
            <person name="Hurst L."/>
            <person name="Atkin R."/>
            <person name="Barron A."/>
            <person name="Bason N."/>
            <person name="Bentley S.D."/>
            <person name="Chillingworth C."/>
            <person name="Chillingworth T."/>
            <person name="Churcher C."/>
            <person name="Clark L."/>
            <person name="Corton C."/>
            <person name="Cronin A."/>
            <person name="Doggett J."/>
            <person name="Dowd L."/>
            <person name="Feltwell T."/>
            <person name="Hance Z."/>
            <person name="Harris B."/>
            <person name="Hauser H."/>
            <person name="Holroyd S."/>
            <person name="Jagels K."/>
            <person name="James K.D."/>
            <person name="Lennard N."/>
            <person name="Line A."/>
            <person name="Mayes R."/>
            <person name="Moule S."/>
            <person name="Mungall K."/>
            <person name="Ormond D."/>
            <person name="Quail M.A."/>
            <person name="Rabbinowitsch E."/>
            <person name="Rutherford K.M."/>
            <person name="Sanders M."/>
            <person name="Sharp S."/>
            <person name="Simmonds M."/>
            <person name="Stevens K."/>
            <person name="Whitehead S."/>
            <person name="Barrell B.G."/>
            <person name="Spratt B.G."/>
            <person name="Parkhill J."/>
        </authorList>
    </citation>
    <scope>NUCLEOTIDE SEQUENCE [LARGE SCALE GENOMIC DNA]</scope>
    <source>
        <strain>MSSA476</strain>
    </source>
</reference>
<keyword id="KW-0050">Antiport</keyword>
<keyword id="KW-1003">Cell membrane</keyword>
<keyword id="KW-0445">Lipid transport</keyword>
<keyword id="KW-0472">Membrane</keyword>
<keyword id="KW-0812">Transmembrane</keyword>
<keyword id="KW-1133">Transmembrane helix</keyword>
<keyword id="KW-0813">Transport</keyword>
<keyword id="KW-0843">Virulence</keyword>
<protein>
    <recommendedName>
        <fullName evidence="1">Proton-coupled antiporter flippase LtaA</fullName>
    </recommendedName>
    <alternativeName>
        <fullName evidence="1">Lipoteichoic acid protein A</fullName>
    </alternativeName>
</protein>
<sequence length="396" mass="44576">MQDSSLNNYANHKNFILMLIILFLMEFARGMYILSYINFLPTVTSIAVAITSLAFSIHFIADASTNFVIGFLLKKFGTKIVLTTGFILAFTSLFLVIWFPASPFVIIFSAMMLGIAVSPIWVIMLSSVEEDKRGKQMGYVYFSWLLGLLVGMVFMNLLIKVHPTRFAFMMSLVVLIAWILYYFVDVKLTNYNTRPVKAQLRQIVDVTKRHLLLFPGILLQGAAIAALVPILPTYATKVINVSTIEYTVAIIIGGIGCAVSMLFLSKLIDNRSRNFMYGVILSGFILYMILIFTLSMIVNIHIVWIIALAIGLMYGILLPAWNTFMARFIKSDEQEETWGVFNSIQGFGSMIGPLFGGLITQFTNNLNNTFYFSALIFLVLAVFYGSYFIANREKAK</sequence>
<dbReference type="EMBL" id="BX571857">
    <property type="protein sequence ID" value="CAG42660.1"/>
    <property type="molecule type" value="Genomic_DNA"/>
</dbReference>
<dbReference type="RefSeq" id="WP_001154224.1">
    <property type="nucleotide sequence ID" value="NC_002953.3"/>
</dbReference>
<dbReference type="SMR" id="Q6GAR1"/>
<dbReference type="KEGG" id="sas:SAS0885"/>
<dbReference type="HOGENOM" id="CLU_054518_0_0_9"/>
<dbReference type="UniPathway" id="UPA00556"/>
<dbReference type="GO" id="GO:0005886">
    <property type="term" value="C:plasma membrane"/>
    <property type="evidence" value="ECO:0007669"/>
    <property type="project" value="UniProtKB-SubCell"/>
</dbReference>
<dbReference type="GO" id="GO:0015297">
    <property type="term" value="F:antiporter activity"/>
    <property type="evidence" value="ECO:0007669"/>
    <property type="project" value="UniProtKB-KW"/>
</dbReference>
<dbReference type="GO" id="GO:0006869">
    <property type="term" value="P:lipid transport"/>
    <property type="evidence" value="ECO:0007669"/>
    <property type="project" value="UniProtKB-KW"/>
</dbReference>
<dbReference type="GO" id="GO:0070395">
    <property type="term" value="P:lipoteichoic acid biosynthetic process"/>
    <property type="evidence" value="ECO:0007669"/>
    <property type="project" value="UniProtKB-UniPathway"/>
</dbReference>
<dbReference type="CDD" id="cd17325">
    <property type="entry name" value="MFS_MdtG_SLC18_like"/>
    <property type="match status" value="1"/>
</dbReference>
<dbReference type="Gene3D" id="1.20.1250.20">
    <property type="entry name" value="MFS general substrate transporter like domains"/>
    <property type="match status" value="2"/>
</dbReference>
<dbReference type="InterPro" id="IPR050495">
    <property type="entry name" value="ATG22/LtaA_families"/>
</dbReference>
<dbReference type="InterPro" id="IPR011701">
    <property type="entry name" value="MFS"/>
</dbReference>
<dbReference type="InterPro" id="IPR020846">
    <property type="entry name" value="MFS_dom"/>
</dbReference>
<dbReference type="InterPro" id="IPR036259">
    <property type="entry name" value="MFS_trans_sf"/>
</dbReference>
<dbReference type="NCBIfam" id="NF047396">
    <property type="entry name" value="MFS_flip_LtaA"/>
    <property type="match status" value="1"/>
</dbReference>
<dbReference type="PANTHER" id="PTHR23519">
    <property type="entry name" value="AUTOPHAGY-RELATED PROTEIN 22"/>
    <property type="match status" value="1"/>
</dbReference>
<dbReference type="PANTHER" id="PTHR23519:SF1">
    <property type="entry name" value="AUTOPHAGY-RELATED PROTEIN 22"/>
    <property type="match status" value="1"/>
</dbReference>
<dbReference type="Pfam" id="PF07690">
    <property type="entry name" value="MFS_1"/>
    <property type="match status" value="1"/>
</dbReference>
<dbReference type="SUPFAM" id="SSF103473">
    <property type="entry name" value="MFS general substrate transporter"/>
    <property type="match status" value="1"/>
</dbReference>
<dbReference type="PROSITE" id="PS50850">
    <property type="entry name" value="MFS"/>
    <property type="match status" value="1"/>
</dbReference>
<comment type="function">
    <text evidence="1">Proton-coupled antiporter flippase that catalyzes the translocation, from the inner to the outer leaflet of the cell membrane, of the lipid-linked disaccharide (anchor-LLD) that anchors lipoteichoic acids (LTA) to the cell membrane.</text>
</comment>
<comment type="pathway">
    <text evidence="1">Cell wall biogenesis; lipoteichoic acid biosynthesis.</text>
</comment>
<comment type="subcellular location">
    <subcellularLocation>
        <location evidence="1">Cell membrane</location>
        <topology evidence="1">Multi-pass membrane protein</topology>
    </subcellularLocation>
</comment>
<comment type="similarity">
    <text evidence="3">Belongs to the major facilitator superfamily. LtaA family.</text>
</comment>
<name>LTAA_STAAS</name>
<gene>
    <name type="primary">ltaA</name>
    <name type="ordered locus">SAS0885</name>
</gene>
<accession>Q6GAR1</accession>